<keyword id="KW-0004">4Fe-4S</keyword>
<keyword id="KW-0150">Chloroplast</keyword>
<keyword id="KW-0249">Electron transport</keyword>
<keyword id="KW-0349">Heme</keyword>
<keyword id="KW-0408">Iron</keyword>
<keyword id="KW-0411">Iron-sulfur</keyword>
<keyword id="KW-0479">Metal-binding</keyword>
<keyword id="KW-0534">Nitrate assimilation</keyword>
<keyword id="KW-0560">Oxidoreductase</keyword>
<keyword id="KW-0934">Plastid</keyword>
<keyword id="KW-1185">Reference proteome</keyword>
<keyword id="KW-0677">Repeat</keyword>
<keyword id="KW-0809">Transit peptide</keyword>
<keyword id="KW-0813">Transport</keyword>
<sequence>MASSASLQRFLPPYPHAAASRCRPPGVRARPVQSSTVSAPSSSTPAADEAVSAERLEPRVEQREGRYWVLKEKYRTGLNPQEKVKLGKEPMSLFMEGGIKELAKMPMEEIEADKLSKEDIDVRLKWLGLFHRRKHQYGRFMMRLKLPNGVTTSEQTRYLASVIEAYGKEGCADVTTRQNWQIRGVTLPDVPAILDGLNAVGLTSLQSGMDNVRNPVGNPLAGIDPDEIVDTRSYTNLLSSYITSNFQGNPTITNLPRKWNVCVIGSHDLYEHPHINDLAYMPAVKGGKFGFNLLVGGFISPKRWEEALPLDAWVPGDDIIPVCKAVLEAYRDLGTRGNRQKTRMMWLIDELGMEAFRSEVEKRMPNGVLERAAPEDLIDKKWQRRDYLGVHPQKQEGMSYVGLHVPVGRVQAADMFELARLADEYGSGELRLTVEQNIVIPNVKNEKVEALLSEPLLQKFSPQPSLLLKGLVACTGNQFCGQAIIETKQRALLVTSQVEKLVSVPRAVRMHWTGCPNSCGQVQVADIGFMGCLTKDSAGKIVEAADIFVGGRVGSDSHLAGAYKKSVPCDELAPIVADILVERFGAVRREREEDEE</sequence>
<organism>
    <name type="scientific">Oryza sativa subsp. japonica</name>
    <name type="common">Rice</name>
    <dbReference type="NCBI Taxonomy" id="39947"/>
    <lineage>
        <taxon>Eukaryota</taxon>
        <taxon>Viridiplantae</taxon>
        <taxon>Streptophyta</taxon>
        <taxon>Embryophyta</taxon>
        <taxon>Tracheophyta</taxon>
        <taxon>Spermatophyta</taxon>
        <taxon>Magnoliopsida</taxon>
        <taxon>Liliopsida</taxon>
        <taxon>Poales</taxon>
        <taxon>Poaceae</taxon>
        <taxon>BOP clade</taxon>
        <taxon>Oryzoideae</taxon>
        <taxon>Oryzeae</taxon>
        <taxon>Oryzinae</taxon>
        <taxon>Oryza</taxon>
        <taxon>Oryza sativa</taxon>
    </lineage>
</organism>
<gene>
    <name type="ordered locus">Os01g0357100</name>
    <name type="ordered locus">LOC_Os01g25484</name>
    <name type="ORF">P0025H06.19-1</name>
    <name type="ORF">P0025H06.19-2</name>
</gene>
<evidence type="ECO:0000250" key="1"/>
<evidence type="ECO:0000255" key="2"/>
<evidence type="ECO:0000256" key="3">
    <source>
        <dbReference type="SAM" id="MobiDB-lite"/>
    </source>
</evidence>
<evidence type="ECO:0000305" key="4"/>
<comment type="function">
    <text>Catalyzes the six-electron reduction of nitrite to ammonium.</text>
</comment>
<comment type="catalytic activity">
    <reaction>
        <text>6 oxidized [2Fe-2S]-[ferredoxin] + NH4(+) + 2 H2O = nitrite + 6 reduced [2Fe-2S]-[ferredoxin] + 8 H(+)</text>
        <dbReference type="Rhea" id="RHEA:18041"/>
        <dbReference type="Rhea" id="RHEA-COMP:10000"/>
        <dbReference type="Rhea" id="RHEA-COMP:10001"/>
        <dbReference type="ChEBI" id="CHEBI:15377"/>
        <dbReference type="ChEBI" id="CHEBI:15378"/>
        <dbReference type="ChEBI" id="CHEBI:16301"/>
        <dbReference type="ChEBI" id="CHEBI:28938"/>
        <dbReference type="ChEBI" id="CHEBI:33737"/>
        <dbReference type="ChEBI" id="CHEBI:33738"/>
        <dbReference type="EC" id="1.7.7.1"/>
    </reaction>
</comment>
<comment type="cofactor">
    <cofactor evidence="1">
        <name>siroheme</name>
        <dbReference type="ChEBI" id="CHEBI:60052"/>
    </cofactor>
    <text evidence="1">Binds 1 siroheme per subunit.</text>
</comment>
<comment type="cofactor">
    <cofactor evidence="1">
        <name>[4Fe-4S] cluster</name>
        <dbReference type="ChEBI" id="CHEBI:49883"/>
    </cofactor>
    <text evidence="1">Binds 1 [4Fe-4S] cluster per subunit.</text>
</comment>
<comment type="pathway">
    <text>Nitrogen metabolism; nitrate reduction (assimilation).</text>
</comment>
<comment type="subunit">
    <text evidence="1">Monomer.</text>
</comment>
<comment type="subcellular location">
    <subcellularLocation>
        <location evidence="4">Plastid</location>
        <location evidence="4">Chloroplast</location>
    </subcellularLocation>
</comment>
<comment type="similarity">
    <text evidence="4">Belongs to the nitrite and sulfite reductase 4Fe-4S domain family.</text>
</comment>
<comment type="sequence caution" evidence="4">
    <conflict type="erroneous gene model prediction">
        <sequence resource="EMBL-CDS" id="BAD53072"/>
    </conflict>
</comment>
<proteinExistence type="evidence at transcript level"/>
<accession>Q42997</accession>
<accession>Q5ZBK4</accession>
<accession>Q7F475</accession>
<name>NIR_ORYSJ</name>
<reference key="1">
    <citation type="journal article" date="1995" name="Biosci. Biotechnol. Biochem.">
        <title>Cloning and nucleotide sequence of a leaf ferredoxin-nitrite reductase cDNA of rice.</title>
        <authorList>
            <person name="Terada Y."/>
            <person name="Aoki H."/>
            <person name="Tanaka T."/>
            <person name="Morikawa H."/>
            <person name="Ida S."/>
        </authorList>
    </citation>
    <scope>NUCLEOTIDE SEQUENCE [MRNA]</scope>
    <source>
        <strain>cv. Kinmaze</strain>
        <tissue>Leaf</tissue>
    </source>
</reference>
<reference key="2">
    <citation type="journal article" date="2002" name="Nature">
        <title>The genome sequence and structure of rice chromosome 1.</title>
        <authorList>
            <person name="Sasaki T."/>
            <person name="Matsumoto T."/>
            <person name="Yamamoto K."/>
            <person name="Sakata K."/>
            <person name="Baba T."/>
            <person name="Katayose Y."/>
            <person name="Wu J."/>
            <person name="Niimura Y."/>
            <person name="Cheng Z."/>
            <person name="Nagamura Y."/>
            <person name="Antonio B.A."/>
            <person name="Kanamori H."/>
            <person name="Hosokawa S."/>
            <person name="Masukawa M."/>
            <person name="Arikawa K."/>
            <person name="Chiden Y."/>
            <person name="Hayashi M."/>
            <person name="Okamoto M."/>
            <person name="Ando T."/>
            <person name="Aoki H."/>
            <person name="Arita K."/>
            <person name="Hamada M."/>
            <person name="Harada C."/>
            <person name="Hijishita S."/>
            <person name="Honda M."/>
            <person name="Ichikawa Y."/>
            <person name="Idonuma A."/>
            <person name="Iijima M."/>
            <person name="Ikeda M."/>
            <person name="Ikeno M."/>
            <person name="Ito S."/>
            <person name="Ito T."/>
            <person name="Ito Y."/>
            <person name="Ito Y."/>
            <person name="Iwabuchi A."/>
            <person name="Kamiya K."/>
            <person name="Karasawa W."/>
            <person name="Katagiri S."/>
            <person name="Kikuta A."/>
            <person name="Kobayashi N."/>
            <person name="Kono I."/>
            <person name="Machita K."/>
            <person name="Maehara T."/>
            <person name="Mizuno H."/>
            <person name="Mizubayashi T."/>
            <person name="Mukai Y."/>
            <person name="Nagasaki H."/>
            <person name="Nakashima M."/>
            <person name="Nakama Y."/>
            <person name="Nakamichi Y."/>
            <person name="Nakamura M."/>
            <person name="Namiki N."/>
            <person name="Negishi M."/>
            <person name="Ohta I."/>
            <person name="Ono N."/>
            <person name="Saji S."/>
            <person name="Sakai K."/>
            <person name="Shibata M."/>
            <person name="Shimokawa T."/>
            <person name="Shomura A."/>
            <person name="Song J."/>
            <person name="Takazaki Y."/>
            <person name="Terasawa K."/>
            <person name="Tsuji K."/>
            <person name="Waki K."/>
            <person name="Yamagata H."/>
            <person name="Yamane H."/>
            <person name="Yoshiki S."/>
            <person name="Yoshihara R."/>
            <person name="Yukawa K."/>
            <person name="Zhong H."/>
            <person name="Iwama H."/>
            <person name="Endo T."/>
            <person name="Ito H."/>
            <person name="Hahn J.H."/>
            <person name="Kim H.-I."/>
            <person name="Eun M.-Y."/>
            <person name="Yano M."/>
            <person name="Jiang J."/>
            <person name="Gojobori T."/>
        </authorList>
    </citation>
    <scope>NUCLEOTIDE SEQUENCE [LARGE SCALE GENOMIC DNA]</scope>
    <source>
        <strain>cv. Nipponbare</strain>
    </source>
</reference>
<reference key="3">
    <citation type="journal article" date="2005" name="Nature">
        <title>The map-based sequence of the rice genome.</title>
        <authorList>
            <consortium name="International rice genome sequencing project (IRGSP)"/>
        </authorList>
    </citation>
    <scope>NUCLEOTIDE SEQUENCE [LARGE SCALE GENOMIC DNA]</scope>
    <source>
        <strain>cv. Nipponbare</strain>
    </source>
</reference>
<reference key="4">
    <citation type="journal article" date="2013" name="Rice">
        <title>Improvement of the Oryza sativa Nipponbare reference genome using next generation sequence and optical map data.</title>
        <authorList>
            <person name="Kawahara Y."/>
            <person name="de la Bastide M."/>
            <person name="Hamilton J.P."/>
            <person name="Kanamori H."/>
            <person name="McCombie W.R."/>
            <person name="Ouyang S."/>
            <person name="Schwartz D.C."/>
            <person name="Tanaka T."/>
            <person name="Wu J."/>
            <person name="Zhou S."/>
            <person name="Childs K.L."/>
            <person name="Davidson R.M."/>
            <person name="Lin H."/>
            <person name="Quesada-Ocampo L."/>
            <person name="Vaillancourt B."/>
            <person name="Sakai H."/>
            <person name="Lee S.S."/>
            <person name="Kim J."/>
            <person name="Numa H."/>
            <person name="Itoh T."/>
            <person name="Buell C.R."/>
            <person name="Matsumoto T."/>
        </authorList>
    </citation>
    <scope>GENOME REANNOTATION</scope>
    <source>
        <strain>cv. Nipponbare</strain>
    </source>
</reference>
<feature type="transit peptide" description="Chloroplast" evidence="2">
    <location>
        <begin position="1"/>
        <end position="28"/>
    </location>
</feature>
<feature type="chain" id="PRO_0000247480" description="Ferredoxin--nitrite reductase, chloroplastic">
    <location>
        <begin position="29"/>
        <end position="596"/>
    </location>
</feature>
<feature type="region of interest" description="Disordered" evidence="3">
    <location>
        <begin position="1"/>
        <end position="56"/>
    </location>
</feature>
<feature type="compositionally biased region" description="Low complexity" evidence="3">
    <location>
        <begin position="31"/>
        <end position="47"/>
    </location>
</feature>
<feature type="binding site" evidence="1">
    <location>
        <position position="474"/>
    </location>
    <ligand>
        <name>[4Fe-4S] cluster</name>
        <dbReference type="ChEBI" id="CHEBI:49883"/>
    </ligand>
</feature>
<feature type="binding site" evidence="1">
    <location>
        <position position="480"/>
    </location>
    <ligand>
        <name>[4Fe-4S] cluster</name>
        <dbReference type="ChEBI" id="CHEBI:49883"/>
    </ligand>
</feature>
<feature type="binding site" evidence="1">
    <location>
        <position position="515"/>
    </location>
    <ligand>
        <name>[4Fe-4S] cluster</name>
        <dbReference type="ChEBI" id="CHEBI:49883"/>
    </ligand>
</feature>
<feature type="binding site" evidence="1">
    <location>
        <position position="519"/>
    </location>
    <ligand>
        <name>[4Fe-4S] cluster</name>
        <dbReference type="ChEBI" id="CHEBI:49883"/>
    </ligand>
</feature>
<feature type="binding site" description="axial binding residue" evidence="1">
    <location>
        <position position="519"/>
    </location>
    <ligand>
        <name>siroheme</name>
        <dbReference type="ChEBI" id="CHEBI:60052"/>
    </ligand>
    <ligandPart>
        <name>Fe</name>
        <dbReference type="ChEBI" id="CHEBI:18248"/>
    </ligandPart>
</feature>
<dbReference type="EC" id="1.7.7.1"/>
<dbReference type="EMBL" id="D50556">
    <property type="protein sequence ID" value="BAA09122.1"/>
    <property type="molecule type" value="mRNA"/>
</dbReference>
<dbReference type="EMBL" id="AP003312">
    <property type="protein sequence ID" value="BAC10721.1"/>
    <property type="molecule type" value="Genomic_DNA"/>
</dbReference>
<dbReference type="EMBL" id="AP003312">
    <property type="protein sequence ID" value="BAD53072.1"/>
    <property type="status" value="ALT_SEQ"/>
    <property type="molecule type" value="Genomic_DNA"/>
</dbReference>
<dbReference type="EMBL" id="AP014957">
    <property type="status" value="NOT_ANNOTATED_CDS"/>
    <property type="molecule type" value="Genomic_DNA"/>
</dbReference>
<dbReference type="PIR" id="JC4395">
    <property type="entry name" value="JC4395"/>
</dbReference>
<dbReference type="RefSeq" id="XP_015641702.1">
    <property type="nucleotide sequence ID" value="XM_015786216.1"/>
</dbReference>
<dbReference type="SMR" id="Q42997"/>
<dbReference type="FunCoup" id="Q42997">
    <property type="interactions" value="118"/>
</dbReference>
<dbReference type="STRING" id="39947.Q42997"/>
<dbReference type="PaxDb" id="39947-Q42997"/>
<dbReference type="EnsemblPlants" id="Os01t0357100-01">
    <property type="protein sequence ID" value="Os01t0357100-01"/>
    <property type="gene ID" value="Os01g0357100"/>
</dbReference>
<dbReference type="Gramene" id="Os01t0357100-01">
    <property type="protein sequence ID" value="Os01t0357100-01"/>
    <property type="gene ID" value="Os01g0357100"/>
</dbReference>
<dbReference type="eggNOG" id="KOG0560">
    <property type="taxonomic scope" value="Eukaryota"/>
</dbReference>
<dbReference type="InParanoid" id="Q42997"/>
<dbReference type="OrthoDB" id="432685at2759"/>
<dbReference type="UniPathway" id="UPA00653"/>
<dbReference type="Proteomes" id="UP000000763">
    <property type="component" value="Chromosome 1"/>
</dbReference>
<dbReference type="Proteomes" id="UP000059680">
    <property type="component" value="Chromosome 1"/>
</dbReference>
<dbReference type="ExpressionAtlas" id="Q42997">
    <property type="expression patterns" value="baseline and differential"/>
</dbReference>
<dbReference type="GO" id="GO:0009507">
    <property type="term" value="C:chloroplast"/>
    <property type="evidence" value="ECO:0007669"/>
    <property type="project" value="UniProtKB-SubCell"/>
</dbReference>
<dbReference type="GO" id="GO:0051539">
    <property type="term" value="F:4 iron, 4 sulfur cluster binding"/>
    <property type="evidence" value="ECO:0007669"/>
    <property type="project" value="UniProtKB-KW"/>
</dbReference>
<dbReference type="GO" id="GO:0048307">
    <property type="term" value="F:ferredoxin-nitrite reductase activity"/>
    <property type="evidence" value="ECO:0007669"/>
    <property type="project" value="UniProtKB-EC"/>
</dbReference>
<dbReference type="GO" id="GO:0020037">
    <property type="term" value="F:heme binding"/>
    <property type="evidence" value="ECO:0007669"/>
    <property type="project" value="InterPro"/>
</dbReference>
<dbReference type="GO" id="GO:0046872">
    <property type="term" value="F:metal ion binding"/>
    <property type="evidence" value="ECO:0007669"/>
    <property type="project" value="UniProtKB-KW"/>
</dbReference>
<dbReference type="GO" id="GO:0042128">
    <property type="term" value="P:nitrate assimilation"/>
    <property type="evidence" value="ECO:0007669"/>
    <property type="project" value="UniProtKB-UniPathway"/>
</dbReference>
<dbReference type="Gene3D" id="3.90.480.20">
    <property type="match status" value="1"/>
</dbReference>
<dbReference type="Gene3D" id="3.30.413.10">
    <property type="entry name" value="Sulfite Reductase Hemoprotein, domain 1"/>
    <property type="match status" value="2"/>
</dbReference>
<dbReference type="InterPro" id="IPR051329">
    <property type="entry name" value="NIR_SIR_4Fe-4S"/>
</dbReference>
<dbReference type="InterPro" id="IPR005117">
    <property type="entry name" value="NiRdtase/SiRdtase_haem-b_fer"/>
</dbReference>
<dbReference type="InterPro" id="IPR036136">
    <property type="entry name" value="Nit/Sulf_reduc_fer-like_dom_sf"/>
</dbReference>
<dbReference type="InterPro" id="IPR006067">
    <property type="entry name" value="NO2/SO3_Rdtase_4Fe4S_dom"/>
</dbReference>
<dbReference type="InterPro" id="IPR045854">
    <property type="entry name" value="NO2/SO3_Rdtase_4Fe4S_sf"/>
</dbReference>
<dbReference type="InterPro" id="IPR006066">
    <property type="entry name" value="NO2/SO3_Rdtase_FeS/sirohaem_BS"/>
</dbReference>
<dbReference type="NCBIfam" id="NF007125">
    <property type="entry name" value="PRK09566.1"/>
    <property type="match status" value="1"/>
</dbReference>
<dbReference type="PANTHER" id="PTHR32439">
    <property type="entry name" value="FERREDOXIN--NITRITE REDUCTASE, CHLOROPLASTIC"/>
    <property type="match status" value="1"/>
</dbReference>
<dbReference type="PANTHER" id="PTHR32439:SF0">
    <property type="entry name" value="FERREDOXIN--NITRITE REDUCTASE, CHLOROPLASTIC"/>
    <property type="match status" value="1"/>
</dbReference>
<dbReference type="Pfam" id="PF01077">
    <property type="entry name" value="NIR_SIR"/>
    <property type="match status" value="2"/>
</dbReference>
<dbReference type="Pfam" id="PF03460">
    <property type="entry name" value="NIR_SIR_ferr"/>
    <property type="match status" value="2"/>
</dbReference>
<dbReference type="PRINTS" id="PR00397">
    <property type="entry name" value="SIROHAEM"/>
</dbReference>
<dbReference type="SUPFAM" id="SSF56014">
    <property type="entry name" value="Nitrite and sulphite reductase 4Fe-4S domain-like"/>
    <property type="match status" value="2"/>
</dbReference>
<dbReference type="SUPFAM" id="SSF55124">
    <property type="entry name" value="Nitrite/Sulfite reductase N-terminal domain-like"/>
    <property type="match status" value="2"/>
</dbReference>
<dbReference type="PROSITE" id="PS00365">
    <property type="entry name" value="NIR_SIR"/>
    <property type="match status" value="1"/>
</dbReference>
<protein>
    <recommendedName>
        <fullName>Ferredoxin--nitrite reductase, chloroplastic</fullName>
        <ecNumber>1.7.7.1</ecNumber>
    </recommendedName>
</protein>